<proteinExistence type="evidence at protein level"/>
<organism>
    <name type="scientific">Arabidopsis thaliana</name>
    <name type="common">Mouse-ear cress</name>
    <dbReference type="NCBI Taxonomy" id="3702"/>
    <lineage>
        <taxon>Eukaryota</taxon>
        <taxon>Viridiplantae</taxon>
        <taxon>Streptophyta</taxon>
        <taxon>Embryophyta</taxon>
        <taxon>Tracheophyta</taxon>
        <taxon>Spermatophyta</taxon>
        <taxon>Magnoliopsida</taxon>
        <taxon>eudicotyledons</taxon>
        <taxon>Gunneridae</taxon>
        <taxon>Pentapetalae</taxon>
        <taxon>rosids</taxon>
        <taxon>malvids</taxon>
        <taxon>Brassicales</taxon>
        <taxon>Brassicaceae</taxon>
        <taxon>Camelineae</taxon>
        <taxon>Arabidopsis</taxon>
    </lineage>
</organism>
<evidence type="ECO:0000255" key="1">
    <source>
        <dbReference type="PROSITE-ProRule" id="PRU00285"/>
    </source>
</evidence>
<evidence type="ECO:0000255" key="2">
    <source>
        <dbReference type="PROSITE-ProRule" id="PRU00355"/>
    </source>
</evidence>
<evidence type="ECO:0000256" key="3">
    <source>
        <dbReference type="SAM" id="MobiDB-lite"/>
    </source>
</evidence>
<evidence type="ECO:0000305" key="4"/>
<name>ARID5_ARATH</name>
<sequence>MMADTEMQEQDVPSGTKGVVEEPSELEKDLNSIERPKSPVPEDTTHTLDSDVHLSDAPIANQIEANEEVGGQNSVDGRNGDVDQSEKKITSDGGQEETTLGESNPLKGDPSSPHVPEESVKKWKTWLLSDAEAREVDEAGAPQDQEAFIKEVEAFNKENFLEFKAPKFYGQPLNCLKLWRAVIKLGGYDVVTTSKLWRQVGESFHPPKTCTTVSWTFRIFYEKALLEYEKHLRQNGELNLPGSASLPSSGIEKEASSHQASGSGRTRRDAAARAMQGWHSQRLLGSGEVTEPIVKEKGLNSTPKQKNLKNIGVQKQKTTTGMDLVFSHESEKQSTAEVIDVGPPADWVKINVRETKDCFEIFALVPGLLREEVRVQSDPAGRLVIAGQPEQLDNPWGITPFKKVVNFPARIDPLHTSAVVSLHGRLFVRVPFEQ</sequence>
<dbReference type="EMBL" id="AC015450">
    <property type="protein sequence ID" value="AAG51952.1"/>
    <property type="status" value="ALT_SEQ"/>
    <property type="molecule type" value="Genomic_DNA"/>
</dbReference>
<dbReference type="EMBL" id="CP002684">
    <property type="protein sequence ID" value="AEE35851.1"/>
    <property type="molecule type" value="Genomic_DNA"/>
</dbReference>
<dbReference type="EMBL" id="CP002684">
    <property type="protein sequence ID" value="AEE35852.1"/>
    <property type="molecule type" value="Genomic_DNA"/>
</dbReference>
<dbReference type="EMBL" id="CP002684">
    <property type="protein sequence ID" value="ANM57824.1"/>
    <property type="molecule type" value="Genomic_DNA"/>
</dbReference>
<dbReference type="EMBL" id="AK229370">
    <property type="protein sequence ID" value="BAF01233.1"/>
    <property type="molecule type" value="mRNA"/>
</dbReference>
<dbReference type="EMBL" id="AK317473">
    <property type="protein sequence ID" value="BAH20138.1"/>
    <property type="molecule type" value="mRNA"/>
</dbReference>
<dbReference type="PIR" id="A96793">
    <property type="entry name" value="A96793"/>
</dbReference>
<dbReference type="RefSeq" id="NP_001320306.1">
    <molecule id="Q0WNR6-1"/>
    <property type="nucleotide sequence ID" value="NM_001334729.1"/>
</dbReference>
<dbReference type="RefSeq" id="NP_177777.3">
    <molecule id="Q0WNR6-1"/>
    <property type="nucleotide sequence ID" value="NM_106301.4"/>
</dbReference>
<dbReference type="RefSeq" id="NP_974156.1">
    <molecule id="Q0WNR6-1"/>
    <property type="nucleotide sequence ID" value="NM_202427.3"/>
</dbReference>
<dbReference type="SMR" id="Q0WNR6"/>
<dbReference type="BioGRID" id="29203">
    <property type="interactions" value="12"/>
</dbReference>
<dbReference type="FunCoup" id="Q0WNR6">
    <property type="interactions" value="2010"/>
</dbReference>
<dbReference type="IntAct" id="Q0WNR6">
    <property type="interactions" value="13"/>
</dbReference>
<dbReference type="STRING" id="3702.Q0WNR6"/>
<dbReference type="iPTMnet" id="Q0WNR6"/>
<dbReference type="PaxDb" id="3702-AT1G76510.3"/>
<dbReference type="EnsemblPlants" id="AT1G76510.1">
    <molecule id="Q0WNR6-1"/>
    <property type="protein sequence ID" value="AT1G76510.1"/>
    <property type="gene ID" value="AT1G76510"/>
</dbReference>
<dbReference type="EnsemblPlants" id="AT1G76510.2">
    <molecule id="Q0WNR6-1"/>
    <property type="protein sequence ID" value="AT1G76510.2"/>
    <property type="gene ID" value="AT1G76510"/>
</dbReference>
<dbReference type="EnsemblPlants" id="AT1G76510.4">
    <molecule id="Q0WNR6-1"/>
    <property type="protein sequence ID" value="AT1G76510.4"/>
    <property type="gene ID" value="AT1G76510"/>
</dbReference>
<dbReference type="GeneID" id="843984"/>
<dbReference type="Gramene" id="AT1G76510.1">
    <molecule id="Q0WNR6-1"/>
    <property type="protein sequence ID" value="AT1G76510.1"/>
    <property type="gene ID" value="AT1G76510"/>
</dbReference>
<dbReference type="Gramene" id="AT1G76510.2">
    <molecule id="Q0WNR6-1"/>
    <property type="protein sequence ID" value="AT1G76510.2"/>
    <property type="gene ID" value="AT1G76510"/>
</dbReference>
<dbReference type="Gramene" id="AT1G76510.4">
    <molecule id="Q0WNR6-1"/>
    <property type="protein sequence ID" value="AT1G76510.4"/>
    <property type="gene ID" value="AT1G76510"/>
</dbReference>
<dbReference type="KEGG" id="ath:AT1G76510"/>
<dbReference type="Araport" id="AT1G76510"/>
<dbReference type="TAIR" id="AT1G76510">
    <property type="gene designation" value="ARID4"/>
</dbReference>
<dbReference type="eggNOG" id="KOG2744">
    <property type="taxonomic scope" value="Eukaryota"/>
</dbReference>
<dbReference type="HOGENOM" id="CLU_029075_1_0_1"/>
<dbReference type="InParanoid" id="Q0WNR6"/>
<dbReference type="OrthoDB" id="338531at2759"/>
<dbReference type="PhylomeDB" id="Q0WNR6"/>
<dbReference type="PRO" id="PR:Q0WNR6"/>
<dbReference type="Proteomes" id="UP000006548">
    <property type="component" value="Chromosome 1"/>
</dbReference>
<dbReference type="ExpressionAtlas" id="Q0WNR6">
    <property type="expression patterns" value="baseline and differential"/>
</dbReference>
<dbReference type="GO" id="GO:0005634">
    <property type="term" value="C:nucleus"/>
    <property type="evidence" value="ECO:0007669"/>
    <property type="project" value="UniProtKB-SubCell"/>
</dbReference>
<dbReference type="GO" id="GO:0003677">
    <property type="term" value="F:DNA binding"/>
    <property type="evidence" value="ECO:0007669"/>
    <property type="project" value="UniProtKB-KW"/>
</dbReference>
<dbReference type="GO" id="GO:0006357">
    <property type="term" value="P:regulation of transcription by RNA polymerase II"/>
    <property type="evidence" value="ECO:0007669"/>
    <property type="project" value="InterPro"/>
</dbReference>
<dbReference type="CDD" id="cd00298">
    <property type="entry name" value="ACD_sHsps_p23-like"/>
    <property type="match status" value="1"/>
</dbReference>
<dbReference type="CDD" id="cd16100">
    <property type="entry name" value="ARID"/>
    <property type="match status" value="1"/>
</dbReference>
<dbReference type="FunFam" id="1.10.150.60:FF:000009">
    <property type="entry name" value="AT-rich interactive domain-containing protein 3"/>
    <property type="match status" value="1"/>
</dbReference>
<dbReference type="FunFam" id="2.60.40.790:FF:000014">
    <property type="entry name" value="AT-rich interactive domain-containing protein 3"/>
    <property type="match status" value="1"/>
</dbReference>
<dbReference type="Gene3D" id="2.60.40.790">
    <property type="match status" value="1"/>
</dbReference>
<dbReference type="Gene3D" id="1.10.150.60">
    <property type="entry name" value="ARID DNA-binding domain"/>
    <property type="match status" value="1"/>
</dbReference>
<dbReference type="InterPro" id="IPR002068">
    <property type="entry name" value="A-crystallin/Hsp20_dom"/>
</dbReference>
<dbReference type="InterPro" id="IPR045147">
    <property type="entry name" value="ARI3A/B/C"/>
</dbReference>
<dbReference type="InterPro" id="IPR001606">
    <property type="entry name" value="ARID_dom"/>
</dbReference>
<dbReference type="InterPro" id="IPR036431">
    <property type="entry name" value="ARID_dom_sf"/>
</dbReference>
<dbReference type="InterPro" id="IPR008978">
    <property type="entry name" value="HSP20-like_chaperone"/>
</dbReference>
<dbReference type="PANTHER" id="PTHR15348:SF17">
    <property type="entry name" value="AT-RICH INTERACTIVE DOMAIN-CONTAINING PROTEIN 5"/>
    <property type="match status" value="1"/>
</dbReference>
<dbReference type="PANTHER" id="PTHR15348">
    <property type="entry name" value="AT-RICH INTERACTIVE DOMAIN-CONTAINING PROTEIN ARID DOMAIN- CONTAINING PROTEIN DEAD RINGER PROTEIN B-CELL REGULATOR OF IGH TRANSCRIPTION BRIGHT"/>
    <property type="match status" value="1"/>
</dbReference>
<dbReference type="Pfam" id="PF01388">
    <property type="entry name" value="ARID"/>
    <property type="match status" value="1"/>
</dbReference>
<dbReference type="SMART" id="SM01014">
    <property type="entry name" value="ARID"/>
    <property type="match status" value="1"/>
</dbReference>
<dbReference type="SMART" id="SM00501">
    <property type="entry name" value="BRIGHT"/>
    <property type="match status" value="1"/>
</dbReference>
<dbReference type="SUPFAM" id="SSF46774">
    <property type="entry name" value="ARID-like"/>
    <property type="match status" value="1"/>
</dbReference>
<dbReference type="SUPFAM" id="SSF49764">
    <property type="entry name" value="HSP20-like chaperones"/>
    <property type="match status" value="1"/>
</dbReference>
<dbReference type="PROSITE" id="PS51011">
    <property type="entry name" value="ARID"/>
    <property type="match status" value="1"/>
</dbReference>
<dbReference type="PROSITE" id="PS01031">
    <property type="entry name" value="SHSP"/>
    <property type="match status" value="1"/>
</dbReference>
<accession>Q0WNR6</accession>
<accession>Q9C9K6</accession>
<feature type="chain" id="PRO_0000413213" description="AT-rich interactive domain-containing protein 5">
    <location>
        <begin position="1"/>
        <end position="434"/>
    </location>
</feature>
<feature type="domain" description="ARID" evidence="2">
    <location>
        <begin position="142"/>
        <end position="233"/>
    </location>
</feature>
<feature type="domain" description="sHSP" evidence="1">
    <location>
        <begin position="336"/>
        <end position="434"/>
    </location>
</feature>
<feature type="region of interest" description="Disordered" evidence="3">
    <location>
        <begin position="1"/>
        <end position="120"/>
    </location>
</feature>
<feature type="region of interest" description="Disordered" evidence="3">
    <location>
        <begin position="237"/>
        <end position="274"/>
    </location>
</feature>
<feature type="compositionally biased region" description="Basic and acidic residues" evidence="3">
    <location>
        <begin position="25"/>
        <end position="37"/>
    </location>
</feature>
<feature type="compositionally biased region" description="Basic and acidic residues" evidence="3">
    <location>
        <begin position="43"/>
        <end position="54"/>
    </location>
</feature>
<feature type="compositionally biased region" description="Basic and acidic residues" evidence="3">
    <location>
        <begin position="78"/>
        <end position="90"/>
    </location>
</feature>
<feature type="compositionally biased region" description="Polar residues" evidence="3">
    <location>
        <begin position="92"/>
        <end position="102"/>
    </location>
</feature>
<protein>
    <recommendedName>
        <fullName>AT-rich interactive domain-containing protein 5</fullName>
        <shortName>ARID domain-containing protein 5</shortName>
    </recommendedName>
</protein>
<reference key="1">
    <citation type="journal article" date="2000" name="Nature">
        <title>Sequence and analysis of chromosome 1 of the plant Arabidopsis thaliana.</title>
        <authorList>
            <person name="Theologis A."/>
            <person name="Ecker J.R."/>
            <person name="Palm C.J."/>
            <person name="Federspiel N.A."/>
            <person name="Kaul S."/>
            <person name="White O."/>
            <person name="Alonso J."/>
            <person name="Altafi H."/>
            <person name="Araujo R."/>
            <person name="Bowman C.L."/>
            <person name="Brooks S.Y."/>
            <person name="Buehler E."/>
            <person name="Chan A."/>
            <person name="Chao Q."/>
            <person name="Chen H."/>
            <person name="Cheuk R.F."/>
            <person name="Chin C.W."/>
            <person name="Chung M.K."/>
            <person name="Conn L."/>
            <person name="Conway A.B."/>
            <person name="Conway A.R."/>
            <person name="Creasy T.H."/>
            <person name="Dewar K."/>
            <person name="Dunn P."/>
            <person name="Etgu P."/>
            <person name="Feldblyum T.V."/>
            <person name="Feng J.-D."/>
            <person name="Fong B."/>
            <person name="Fujii C.Y."/>
            <person name="Gill J.E."/>
            <person name="Goldsmith A.D."/>
            <person name="Haas B."/>
            <person name="Hansen N.F."/>
            <person name="Hughes B."/>
            <person name="Huizar L."/>
            <person name="Hunter J.L."/>
            <person name="Jenkins J."/>
            <person name="Johnson-Hopson C."/>
            <person name="Khan S."/>
            <person name="Khaykin E."/>
            <person name="Kim C.J."/>
            <person name="Koo H.L."/>
            <person name="Kremenetskaia I."/>
            <person name="Kurtz D.B."/>
            <person name="Kwan A."/>
            <person name="Lam B."/>
            <person name="Langin-Hooper S."/>
            <person name="Lee A."/>
            <person name="Lee J.M."/>
            <person name="Lenz C.A."/>
            <person name="Li J.H."/>
            <person name="Li Y.-P."/>
            <person name="Lin X."/>
            <person name="Liu S.X."/>
            <person name="Liu Z.A."/>
            <person name="Luros J.S."/>
            <person name="Maiti R."/>
            <person name="Marziali A."/>
            <person name="Militscher J."/>
            <person name="Miranda M."/>
            <person name="Nguyen M."/>
            <person name="Nierman W.C."/>
            <person name="Osborne B.I."/>
            <person name="Pai G."/>
            <person name="Peterson J."/>
            <person name="Pham P.K."/>
            <person name="Rizzo M."/>
            <person name="Rooney T."/>
            <person name="Rowley D."/>
            <person name="Sakano H."/>
            <person name="Salzberg S.L."/>
            <person name="Schwartz J.R."/>
            <person name="Shinn P."/>
            <person name="Southwick A.M."/>
            <person name="Sun H."/>
            <person name="Tallon L.J."/>
            <person name="Tambunga G."/>
            <person name="Toriumi M.J."/>
            <person name="Town C.D."/>
            <person name="Utterback T."/>
            <person name="Van Aken S."/>
            <person name="Vaysberg M."/>
            <person name="Vysotskaia V.S."/>
            <person name="Walker M."/>
            <person name="Wu D."/>
            <person name="Yu G."/>
            <person name="Fraser C.M."/>
            <person name="Venter J.C."/>
            <person name="Davis R.W."/>
        </authorList>
    </citation>
    <scope>NUCLEOTIDE SEQUENCE [LARGE SCALE GENOMIC DNA]</scope>
    <source>
        <strain>cv. Columbia</strain>
    </source>
</reference>
<reference key="2">
    <citation type="journal article" date="2017" name="Plant J.">
        <title>Araport11: a complete reannotation of the Arabidopsis thaliana reference genome.</title>
        <authorList>
            <person name="Cheng C.Y."/>
            <person name="Krishnakumar V."/>
            <person name="Chan A.P."/>
            <person name="Thibaud-Nissen F."/>
            <person name="Schobel S."/>
            <person name="Town C.D."/>
        </authorList>
    </citation>
    <scope>GENOME REANNOTATION</scope>
    <source>
        <strain>cv. Columbia</strain>
    </source>
</reference>
<reference key="3">
    <citation type="submission" date="2006-07" db="EMBL/GenBank/DDBJ databases">
        <title>Large-scale analysis of RIKEN Arabidopsis full-length (RAFL) cDNAs.</title>
        <authorList>
            <person name="Totoki Y."/>
            <person name="Seki M."/>
            <person name="Ishida J."/>
            <person name="Nakajima M."/>
            <person name="Enju A."/>
            <person name="Kamiya A."/>
            <person name="Narusaka M."/>
            <person name="Shin-i T."/>
            <person name="Nakagawa M."/>
            <person name="Sakamoto N."/>
            <person name="Oishi K."/>
            <person name="Kohara Y."/>
            <person name="Kobayashi M."/>
            <person name="Toyoda A."/>
            <person name="Sakaki Y."/>
            <person name="Sakurai T."/>
            <person name="Iida K."/>
            <person name="Akiyama K."/>
            <person name="Satou M."/>
            <person name="Toyoda T."/>
            <person name="Konagaya A."/>
            <person name="Carninci P."/>
            <person name="Kawai J."/>
            <person name="Hayashizaki Y."/>
            <person name="Shinozaki K."/>
        </authorList>
    </citation>
    <scope>NUCLEOTIDE SEQUENCE [LARGE SCALE MRNA]</scope>
    <source>
        <strain>cv. Columbia</strain>
    </source>
</reference>
<reference key="4">
    <citation type="journal article" date="2009" name="DNA Res.">
        <title>Analysis of multiple occurrences of alternative splicing events in Arabidopsis thaliana using novel sequenced full-length cDNAs.</title>
        <authorList>
            <person name="Iida K."/>
            <person name="Fukami-Kobayashi K."/>
            <person name="Toyoda A."/>
            <person name="Sakaki Y."/>
            <person name="Kobayashi M."/>
            <person name="Seki M."/>
            <person name="Shinozaki K."/>
        </authorList>
    </citation>
    <scope>NUCLEOTIDE SEQUENCE [LARGE SCALE MRNA]</scope>
    <source>
        <strain>cv. Columbia</strain>
        <tissue>Rosette leaf</tissue>
    </source>
</reference>
<reference key="5">
    <citation type="journal article" date="2009" name="Plant Physiol.">
        <title>Large-scale Arabidopsis phosphoproteome profiling reveals novel chloroplast kinase substrates and phosphorylation networks.</title>
        <authorList>
            <person name="Reiland S."/>
            <person name="Messerli G."/>
            <person name="Baerenfaller K."/>
            <person name="Gerrits B."/>
            <person name="Endler A."/>
            <person name="Grossmann J."/>
            <person name="Gruissem W."/>
            <person name="Baginsky S."/>
        </authorList>
    </citation>
    <scope>IDENTIFICATION BY MASS SPECTROMETRY [LARGE SCALE ANALYSIS]</scope>
</reference>
<comment type="interaction">
    <interactant intactId="EBI-15194457">
        <id>Q0WNR6</id>
    </interactant>
    <interactant intactId="EBI-15200250">
        <id>Q9LDD4</id>
        <label>ARID2</label>
    </interactant>
    <organismsDiffer>false</organismsDiffer>
    <experiments>3</experiments>
</comment>
<comment type="interaction">
    <interactant intactId="EBI-15194457">
        <id>Q0WNR6</id>
    </interactant>
    <interactant intactId="EBI-15196371">
        <id>F4JFG2</id>
        <label>SDG14</label>
    </interactant>
    <organismsDiffer>false</organismsDiffer>
    <experiments>3</experiments>
</comment>
<comment type="subcellular location">
    <subcellularLocation>
        <location evidence="2">Nucleus</location>
    </subcellularLocation>
</comment>
<comment type="alternative products">
    <event type="alternative splicing"/>
    <isoform>
        <id>Q0WNR6-1</id>
        <name>1</name>
        <sequence type="displayed"/>
    </isoform>
    <text>A number of isoforms are produced. According to EST sequences.</text>
</comment>
<comment type="similarity">
    <text evidence="1">Belongs to the small heat shock protein (HSP20) family.</text>
</comment>
<comment type="sequence caution" evidence="4">
    <conflict type="erroneous gene model prediction">
        <sequence resource="EMBL-CDS" id="AAG51952"/>
    </conflict>
</comment>
<gene>
    <name type="primary">ARID5</name>
    <name type="ordered locus">At1g76510</name>
    <name type="ORF">F14G6.11</name>
</gene>
<keyword id="KW-0025">Alternative splicing</keyword>
<keyword id="KW-0238">DNA-binding</keyword>
<keyword id="KW-0539">Nucleus</keyword>
<keyword id="KW-1185">Reference proteome</keyword>
<keyword id="KW-0804">Transcription</keyword>
<keyword id="KW-0805">Transcription regulation</keyword>